<dbReference type="EMBL" id="AY509253">
    <property type="protein sequence ID" value="AAS00958.1"/>
    <property type="molecule type" value="Genomic_DNA"/>
</dbReference>
<dbReference type="RefSeq" id="YP_024611.1">
    <property type="nucleotide sequence ID" value="NC_005881.2"/>
</dbReference>
<dbReference type="KEGG" id="vg:2948257"/>
<dbReference type="Proteomes" id="UP000007021">
    <property type="component" value="Segment"/>
</dbReference>
<feature type="chain" id="PRO_0000385093" description="Uncharacterized protein ORF71">
    <location>
        <begin position="1"/>
        <end position="453"/>
    </location>
</feature>
<accession>Q6R7F7</accession>
<keyword id="KW-1185">Reference proteome</keyword>
<name>Y071_OSHVF</name>
<gene>
    <name type="ORF">ORF71</name>
</gene>
<organismHost>
    <name type="scientific">Magallana gigas</name>
    <name type="common">Pacific oyster</name>
    <name type="synonym">Crassostrea gigas</name>
    <dbReference type="NCBI Taxonomy" id="29159"/>
</organismHost>
<organismHost>
    <name type="scientific">Pecten maximus</name>
    <name type="common">King scallop</name>
    <name type="synonym">Pilgrim's clam</name>
    <dbReference type="NCBI Taxonomy" id="6579"/>
</organismHost>
<sequence length="453" mass="53248">MEIDTSVFDFHQKVKEVILKEYKLNRELIMLKRCLRYKCMSPAAFYVQVLEVNNPYLINDVTAVTRIITNMMKCVPQLRKDGGKLKDSEIKELEDFIPGYIRYLQIVSEYALILFRGNPLPAVELLKWDPKLPLASYVFVDMNDIYTVSAIREHMDVDRILFDMVLDWCNVSSGWSGNVQKIRRTFRWYYEAVFKADEVIYVDRDEISTENLILFLFVYEEVIARQQPMNAIHTHGSYWNTFLKEFSSVPITMRSQDGGNKYIRHSILTAREKIPGKHVKLRSKEFNLFIHNGRRKLPASDVYTATLQIMWELTGKCFLDSSLLNMDKLREGMMFRKIKIRWHSIRDDLVITRLHTLNREQVIMRDFLVRCNVDANAKHKRKRLKPVETLTLFEKSRMESQNITLDYLLYTHSRLISHKAWQQTNKTSTLSAAQLNSEGHVISGKPDQVESQQ</sequence>
<protein>
    <recommendedName>
        <fullName>Uncharacterized protein ORF71</fullName>
    </recommendedName>
</protein>
<organism>
    <name type="scientific">Ostreid herpesvirus 1 (isolate France)</name>
    <name type="common">OsHV-1</name>
    <name type="synonym">Pacific oyster herpesvirus</name>
    <dbReference type="NCBI Taxonomy" id="654903"/>
    <lineage>
        <taxon>Viruses</taxon>
        <taxon>Duplodnaviria</taxon>
        <taxon>Heunggongvirae</taxon>
        <taxon>Peploviricota</taxon>
        <taxon>Herviviricetes</taxon>
        <taxon>Herpesvirales</taxon>
        <taxon>Malacoherpesviridae</taxon>
        <taxon>Ostreavirus</taxon>
        <taxon>Ostreavirus ostreidmalaco1</taxon>
        <taxon>Ostreid herpesvirus 1</taxon>
    </lineage>
</organism>
<reference key="1">
    <citation type="journal article" date="2005" name="J. Gen. Virol.">
        <title>A novel class of herpesvirus with bivalve hosts.</title>
        <authorList>
            <person name="Davison A.J."/>
            <person name="Trus B.L."/>
            <person name="Cheng N."/>
            <person name="Steven A.C."/>
            <person name="Watson M.S."/>
            <person name="Cunningham C."/>
            <person name="Le Deuff R.M."/>
            <person name="Renault T."/>
        </authorList>
    </citation>
    <scope>NUCLEOTIDE SEQUENCE [LARGE SCALE GENOMIC DNA]</scope>
</reference>
<proteinExistence type="predicted"/>